<organism>
    <name type="scientific">Yersinia pseudotuberculosis serotype O:3 (strain YPIII)</name>
    <dbReference type="NCBI Taxonomy" id="502800"/>
    <lineage>
        <taxon>Bacteria</taxon>
        <taxon>Pseudomonadati</taxon>
        <taxon>Pseudomonadota</taxon>
        <taxon>Gammaproteobacteria</taxon>
        <taxon>Enterobacterales</taxon>
        <taxon>Yersiniaceae</taxon>
        <taxon>Yersinia</taxon>
    </lineage>
</organism>
<gene>
    <name evidence="1" type="primary">trpD</name>
    <name type="ordered locus">YPK_2044</name>
</gene>
<evidence type="ECO:0000255" key="1">
    <source>
        <dbReference type="HAMAP-Rule" id="MF_00211"/>
    </source>
</evidence>
<keyword id="KW-0028">Amino-acid biosynthesis</keyword>
<keyword id="KW-0057">Aromatic amino acid biosynthesis</keyword>
<keyword id="KW-0328">Glycosyltransferase</keyword>
<keyword id="KW-0460">Magnesium</keyword>
<keyword id="KW-0479">Metal-binding</keyword>
<keyword id="KW-0808">Transferase</keyword>
<keyword id="KW-0822">Tryptophan biosynthesis</keyword>
<feature type="chain" id="PRO_1000099862" description="Anthranilate phosphoribosyltransferase">
    <location>
        <begin position="1"/>
        <end position="332"/>
    </location>
</feature>
<feature type="binding site" evidence="1">
    <location>
        <position position="79"/>
    </location>
    <ligand>
        <name>5-phospho-alpha-D-ribose 1-diphosphate</name>
        <dbReference type="ChEBI" id="CHEBI:58017"/>
    </ligand>
</feature>
<feature type="binding site" evidence="1">
    <location>
        <position position="79"/>
    </location>
    <ligand>
        <name>anthranilate</name>
        <dbReference type="ChEBI" id="CHEBI:16567"/>
        <label>1</label>
    </ligand>
</feature>
<feature type="binding site" evidence="1">
    <location>
        <begin position="82"/>
        <end position="83"/>
    </location>
    <ligand>
        <name>5-phospho-alpha-D-ribose 1-diphosphate</name>
        <dbReference type="ChEBI" id="CHEBI:58017"/>
    </ligand>
</feature>
<feature type="binding site" evidence="1">
    <location>
        <position position="87"/>
    </location>
    <ligand>
        <name>5-phospho-alpha-D-ribose 1-diphosphate</name>
        <dbReference type="ChEBI" id="CHEBI:58017"/>
    </ligand>
</feature>
<feature type="binding site" evidence="1">
    <location>
        <begin position="89"/>
        <end position="92"/>
    </location>
    <ligand>
        <name>5-phospho-alpha-D-ribose 1-diphosphate</name>
        <dbReference type="ChEBI" id="CHEBI:58017"/>
    </ligand>
</feature>
<feature type="binding site" evidence="1">
    <location>
        <position position="91"/>
    </location>
    <ligand>
        <name>Mg(2+)</name>
        <dbReference type="ChEBI" id="CHEBI:18420"/>
        <label>1</label>
    </ligand>
</feature>
<feature type="binding site" evidence="1">
    <location>
        <begin position="107"/>
        <end position="115"/>
    </location>
    <ligand>
        <name>5-phospho-alpha-D-ribose 1-diphosphate</name>
        <dbReference type="ChEBI" id="CHEBI:58017"/>
    </ligand>
</feature>
<feature type="binding site" evidence="1">
    <location>
        <position position="110"/>
    </location>
    <ligand>
        <name>anthranilate</name>
        <dbReference type="ChEBI" id="CHEBI:16567"/>
        <label>1</label>
    </ligand>
</feature>
<feature type="binding site" evidence="1">
    <location>
        <position position="119"/>
    </location>
    <ligand>
        <name>5-phospho-alpha-D-ribose 1-diphosphate</name>
        <dbReference type="ChEBI" id="CHEBI:58017"/>
    </ligand>
</feature>
<feature type="binding site" evidence="1">
    <location>
        <position position="165"/>
    </location>
    <ligand>
        <name>anthranilate</name>
        <dbReference type="ChEBI" id="CHEBI:16567"/>
        <label>2</label>
    </ligand>
</feature>
<feature type="binding site" evidence="1">
    <location>
        <position position="223"/>
    </location>
    <ligand>
        <name>Mg(2+)</name>
        <dbReference type="ChEBI" id="CHEBI:18420"/>
        <label>2</label>
    </ligand>
</feature>
<feature type="binding site" evidence="1">
    <location>
        <position position="224"/>
    </location>
    <ligand>
        <name>Mg(2+)</name>
        <dbReference type="ChEBI" id="CHEBI:18420"/>
        <label>1</label>
    </ligand>
</feature>
<feature type="binding site" evidence="1">
    <location>
        <position position="224"/>
    </location>
    <ligand>
        <name>Mg(2+)</name>
        <dbReference type="ChEBI" id="CHEBI:18420"/>
        <label>2</label>
    </ligand>
</feature>
<comment type="function">
    <text evidence="1">Catalyzes the transfer of the phosphoribosyl group of 5-phosphorylribose-1-pyrophosphate (PRPP) to anthranilate to yield N-(5'-phosphoribosyl)-anthranilate (PRA).</text>
</comment>
<comment type="catalytic activity">
    <reaction evidence="1">
        <text>N-(5-phospho-beta-D-ribosyl)anthranilate + diphosphate = 5-phospho-alpha-D-ribose 1-diphosphate + anthranilate</text>
        <dbReference type="Rhea" id="RHEA:11768"/>
        <dbReference type="ChEBI" id="CHEBI:16567"/>
        <dbReference type="ChEBI" id="CHEBI:18277"/>
        <dbReference type="ChEBI" id="CHEBI:33019"/>
        <dbReference type="ChEBI" id="CHEBI:58017"/>
        <dbReference type="EC" id="2.4.2.18"/>
    </reaction>
</comment>
<comment type="cofactor">
    <cofactor evidence="1">
        <name>Mg(2+)</name>
        <dbReference type="ChEBI" id="CHEBI:18420"/>
    </cofactor>
    <text evidence="1">Binds 2 magnesium ions per monomer.</text>
</comment>
<comment type="pathway">
    <text evidence="1">Amino-acid biosynthesis; L-tryptophan biosynthesis; L-tryptophan from chorismate: step 2/5.</text>
</comment>
<comment type="subunit">
    <text evidence="1">Homodimer.</text>
</comment>
<comment type="similarity">
    <text evidence="1">Belongs to the anthranilate phosphoribosyltransferase family.</text>
</comment>
<sequence>MQHLFEKLFRAESMSQEESQQLFAAIVRGELDPSQLAAVLISMKVRGETPAEIAGAAQALLADAQHFPRPDYLFADIVGTGGDGTNSINISTASAFVAASCGVKVAKHGNRSVSSRSGSSDLLAAFGIRLDMSAEQSRLALDDLGVCFLFAPQYHTGFRHAMPVRQQLKTRTLFNVLGPLINPARPPLALIGVYSPELVLPIAQTLKVLGYQRAAVVHGGGMDEVAIHAPTQVAELNNGSIESYQLTPEDFGLNRYPLAALQGGMPEENRDILARLLQGKGETAHAAAVAANVALLLKLYGQENLRHNAQQALEMIHSGQAFDRVTALAARG</sequence>
<proteinExistence type="inferred from homology"/>
<name>TRPD_YERPY</name>
<dbReference type="EC" id="2.4.2.18" evidence="1"/>
<dbReference type="EMBL" id="CP000950">
    <property type="protein sequence ID" value="ACA68331.1"/>
    <property type="molecule type" value="Genomic_DNA"/>
</dbReference>
<dbReference type="SMR" id="B1JKS0"/>
<dbReference type="KEGG" id="ypy:YPK_2044"/>
<dbReference type="PATRIC" id="fig|502800.11.peg.2722"/>
<dbReference type="UniPathway" id="UPA00035">
    <property type="reaction ID" value="UER00041"/>
</dbReference>
<dbReference type="GO" id="GO:0005829">
    <property type="term" value="C:cytosol"/>
    <property type="evidence" value="ECO:0007669"/>
    <property type="project" value="TreeGrafter"/>
</dbReference>
<dbReference type="GO" id="GO:0004048">
    <property type="term" value="F:anthranilate phosphoribosyltransferase activity"/>
    <property type="evidence" value="ECO:0007669"/>
    <property type="project" value="UniProtKB-UniRule"/>
</dbReference>
<dbReference type="GO" id="GO:0000287">
    <property type="term" value="F:magnesium ion binding"/>
    <property type="evidence" value="ECO:0007669"/>
    <property type="project" value="UniProtKB-UniRule"/>
</dbReference>
<dbReference type="GO" id="GO:0000162">
    <property type="term" value="P:L-tryptophan biosynthetic process"/>
    <property type="evidence" value="ECO:0007669"/>
    <property type="project" value="UniProtKB-UniRule"/>
</dbReference>
<dbReference type="FunFam" id="1.20.970.10:FF:000003">
    <property type="entry name" value="Anthranilate phosphoribosyltransferase"/>
    <property type="match status" value="1"/>
</dbReference>
<dbReference type="FunFam" id="3.40.1030.10:FF:000002">
    <property type="entry name" value="Anthranilate phosphoribosyltransferase"/>
    <property type="match status" value="1"/>
</dbReference>
<dbReference type="Gene3D" id="3.40.1030.10">
    <property type="entry name" value="Nucleoside phosphorylase/phosphoribosyltransferase catalytic domain"/>
    <property type="match status" value="1"/>
</dbReference>
<dbReference type="Gene3D" id="1.20.970.10">
    <property type="entry name" value="Transferase, Pyrimidine Nucleoside Phosphorylase, Chain C"/>
    <property type="match status" value="1"/>
</dbReference>
<dbReference type="HAMAP" id="MF_00211">
    <property type="entry name" value="TrpD"/>
    <property type="match status" value="1"/>
</dbReference>
<dbReference type="InterPro" id="IPR005940">
    <property type="entry name" value="Anthranilate_Pribosyl_Tfrase"/>
</dbReference>
<dbReference type="InterPro" id="IPR000312">
    <property type="entry name" value="Glycosyl_Trfase_fam3"/>
</dbReference>
<dbReference type="InterPro" id="IPR017459">
    <property type="entry name" value="Glycosyl_Trfase_fam3_N_dom"/>
</dbReference>
<dbReference type="InterPro" id="IPR036320">
    <property type="entry name" value="Glycosyl_Trfase_fam3_N_dom_sf"/>
</dbReference>
<dbReference type="InterPro" id="IPR035902">
    <property type="entry name" value="Nuc_phospho_transferase"/>
</dbReference>
<dbReference type="NCBIfam" id="TIGR01245">
    <property type="entry name" value="trpD"/>
    <property type="match status" value="1"/>
</dbReference>
<dbReference type="PANTHER" id="PTHR43285">
    <property type="entry name" value="ANTHRANILATE PHOSPHORIBOSYLTRANSFERASE"/>
    <property type="match status" value="1"/>
</dbReference>
<dbReference type="PANTHER" id="PTHR43285:SF2">
    <property type="entry name" value="ANTHRANILATE PHOSPHORIBOSYLTRANSFERASE"/>
    <property type="match status" value="1"/>
</dbReference>
<dbReference type="Pfam" id="PF02885">
    <property type="entry name" value="Glycos_trans_3N"/>
    <property type="match status" value="1"/>
</dbReference>
<dbReference type="Pfam" id="PF00591">
    <property type="entry name" value="Glycos_transf_3"/>
    <property type="match status" value="1"/>
</dbReference>
<dbReference type="SUPFAM" id="SSF52418">
    <property type="entry name" value="Nucleoside phosphorylase/phosphoribosyltransferase catalytic domain"/>
    <property type="match status" value="1"/>
</dbReference>
<dbReference type="SUPFAM" id="SSF47648">
    <property type="entry name" value="Nucleoside phosphorylase/phosphoribosyltransferase N-terminal domain"/>
    <property type="match status" value="1"/>
</dbReference>
<reference key="1">
    <citation type="submission" date="2008-02" db="EMBL/GenBank/DDBJ databases">
        <title>Complete sequence of Yersinia pseudotuberculosis YPIII.</title>
        <authorList>
            <consortium name="US DOE Joint Genome Institute"/>
            <person name="Copeland A."/>
            <person name="Lucas S."/>
            <person name="Lapidus A."/>
            <person name="Glavina del Rio T."/>
            <person name="Dalin E."/>
            <person name="Tice H."/>
            <person name="Bruce D."/>
            <person name="Goodwin L."/>
            <person name="Pitluck S."/>
            <person name="Munk A.C."/>
            <person name="Brettin T."/>
            <person name="Detter J.C."/>
            <person name="Han C."/>
            <person name="Tapia R."/>
            <person name="Schmutz J."/>
            <person name="Larimer F."/>
            <person name="Land M."/>
            <person name="Hauser L."/>
            <person name="Challacombe J.F."/>
            <person name="Green L."/>
            <person name="Lindler L.E."/>
            <person name="Nikolich M.P."/>
            <person name="Richardson P."/>
        </authorList>
    </citation>
    <scope>NUCLEOTIDE SEQUENCE [LARGE SCALE GENOMIC DNA]</scope>
    <source>
        <strain>YPIII</strain>
    </source>
</reference>
<protein>
    <recommendedName>
        <fullName evidence="1">Anthranilate phosphoribosyltransferase</fullName>
        <ecNumber evidence="1">2.4.2.18</ecNumber>
    </recommendedName>
</protein>
<accession>B1JKS0</accession>